<feature type="chain" id="PRO_0000047660" description="Zinc finger protein 569">
    <location>
        <begin position="1"/>
        <end position="679"/>
    </location>
</feature>
<feature type="domain" description="KRAB" evidence="3">
    <location>
        <begin position="8"/>
        <end position="79"/>
    </location>
</feature>
<feature type="zinc finger region" description="C2H2-type 1" evidence="2">
    <location>
        <begin position="179"/>
        <end position="201"/>
    </location>
</feature>
<feature type="zinc finger region" description="C2H2-type 2" evidence="2">
    <location>
        <begin position="207"/>
        <end position="229"/>
    </location>
</feature>
<feature type="zinc finger region" description="C2H2-type 3" evidence="2">
    <location>
        <begin position="235"/>
        <end position="257"/>
    </location>
</feature>
<feature type="zinc finger region" description="C2H2-type 4" evidence="2">
    <location>
        <begin position="263"/>
        <end position="285"/>
    </location>
</feature>
<feature type="zinc finger region" description="C2H2-type 5" evidence="2">
    <location>
        <begin position="291"/>
        <end position="313"/>
    </location>
</feature>
<feature type="zinc finger region" description="C2H2-type 6" evidence="2">
    <location>
        <begin position="319"/>
        <end position="341"/>
    </location>
</feature>
<feature type="zinc finger region" description="C2H2-type 7" evidence="2">
    <location>
        <begin position="347"/>
        <end position="369"/>
    </location>
</feature>
<feature type="zinc finger region" description="C2H2-type 8" evidence="2">
    <location>
        <begin position="375"/>
        <end position="397"/>
    </location>
</feature>
<feature type="zinc finger region" description="C2H2-type 9" evidence="2">
    <location>
        <begin position="403"/>
        <end position="425"/>
    </location>
</feature>
<feature type="zinc finger region" description="C2H2-type 10" evidence="2">
    <location>
        <begin position="431"/>
        <end position="453"/>
    </location>
</feature>
<feature type="zinc finger region" description="C2H2-type 11" evidence="2">
    <location>
        <begin position="459"/>
        <end position="481"/>
    </location>
</feature>
<feature type="zinc finger region" description="C2H2-type 12" evidence="2">
    <location>
        <begin position="487"/>
        <end position="509"/>
    </location>
</feature>
<feature type="zinc finger region" description="C2H2-type 13" evidence="2">
    <location>
        <begin position="515"/>
        <end position="537"/>
    </location>
</feature>
<feature type="zinc finger region" description="C2H2-type 14" evidence="2">
    <location>
        <begin position="543"/>
        <end position="565"/>
    </location>
</feature>
<feature type="zinc finger region" description="C2H2-type 15" evidence="2">
    <location>
        <begin position="571"/>
        <end position="593"/>
    </location>
</feature>
<feature type="zinc finger region" description="C2H2-type 16" evidence="2">
    <location>
        <begin position="599"/>
        <end position="621"/>
    </location>
</feature>
<feature type="zinc finger region" description="C2H2-type 17" evidence="2">
    <location>
        <begin position="627"/>
        <end position="649"/>
    </location>
</feature>
<feature type="zinc finger region" description="C2H2-type 18" evidence="2">
    <location>
        <begin position="655"/>
        <end position="677"/>
    </location>
</feature>
<feature type="sequence conflict" description="In Ref. 2; AAH50048." evidence="4" ref="2">
    <original>G</original>
    <variation>R</variation>
    <location>
        <position position="343"/>
    </location>
</feature>
<feature type="sequence conflict" description="In Ref. 2; AAH50048." evidence="4" ref="2">
    <original>S</original>
    <variation>G</variation>
    <location>
        <position position="564"/>
    </location>
</feature>
<gene>
    <name type="primary">Znf569</name>
    <name type="synonym">Zfp74</name>
</gene>
<reference key="1">
    <citation type="journal article" date="2009" name="PLoS Biol.">
        <title>Lineage-specific biology revealed by a finished genome assembly of the mouse.</title>
        <authorList>
            <person name="Church D.M."/>
            <person name="Goodstadt L."/>
            <person name="Hillier L.W."/>
            <person name="Zody M.C."/>
            <person name="Goldstein S."/>
            <person name="She X."/>
            <person name="Bult C.J."/>
            <person name="Agarwala R."/>
            <person name="Cherry J.L."/>
            <person name="DiCuccio M."/>
            <person name="Hlavina W."/>
            <person name="Kapustin Y."/>
            <person name="Meric P."/>
            <person name="Maglott D."/>
            <person name="Birtle Z."/>
            <person name="Marques A.C."/>
            <person name="Graves T."/>
            <person name="Zhou S."/>
            <person name="Teague B."/>
            <person name="Potamousis K."/>
            <person name="Churas C."/>
            <person name="Place M."/>
            <person name="Herschleb J."/>
            <person name="Runnheim R."/>
            <person name="Forrest D."/>
            <person name="Amos-Landgraf J."/>
            <person name="Schwartz D.C."/>
            <person name="Cheng Z."/>
            <person name="Lindblad-Toh K."/>
            <person name="Eichler E.E."/>
            <person name="Ponting C.P."/>
        </authorList>
    </citation>
    <scope>NUCLEOTIDE SEQUENCE [LARGE SCALE GENOMIC DNA]</scope>
    <source>
        <strain>C57BL/6J</strain>
    </source>
</reference>
<reference key="2">
    <citation type="journal article" date="2004" name="Genome Res.">
        <title>The status, quality, and expansion of the NIH full-length cDNA project: the Mammalian Gene Collection (MGC).</title>
        <authorList>
            <consortium name="The MGC Project Team"/>
        </authorList>
    </citation>
    <scope>NUCLEOTIDE SEQUENCE [LARGE SCALE MRNA]</scope>
    <source>
        <strain>C57BL/6J</strain>
        <tissue>Embryo</tissue>
    </source>
</reference>
<reference key="3">
    <citation type="journal article" date="1998" name="Gene">
        <title>Rapid and efficient cloning of cDNAs encoding Krueppel-like zinc finger proteins by degenerate PCR.</title>
        <authorList>
            <person name="Agata Y."/>
            <person name="Matsuda E."/>
            <person name="Shimizu A."/>
        </authorList>
    </citation>
    <scope>NUCLEOTIDE SEQUENCE [MRNA] OF 540-596</scope>
    <source>
        <strain>C57BL/6J</strain>
    </source>
</reference>
<name>ZN569_MOUSE</name>
<comment type="function">
    <text evidence="1">May be involved in transcriptional regulation.</text>
</comment>
<comment type="subcellular location">
    <subcellularLocation>
        <location evidence="1">Nucleus</location>
    </subcellularLocation>
</comment>
<comment type="similarity">
    <text evidence="4">Belongs to the krueppel C2H2-type zinc-finger protein family.</text>
</comment>
<protein>
    <recommendedName>
        <fullName>Zinc finger protein 569</fullName>
    </recommendedName>
    <alternativeName>
        <fullName>Mszf21</fullName>
    </alternativeName>
    <alternativeName>
        <fullName>Zinc finger protein 74</fullName>
        <shortName>Zfp-74</shortName>
    </alternativeName>
</protein>
<proteinExistence type="evidence at transcript level"/>
<evidence type="ECO:0000250" key="1"/>
<evidence type="ECO:0000255" key="2">
    <source>
        <dbReference type="PROSITE-ProRule" id="PRU00042"/>
    </source>
</evidence>
<evidence type="ECO:0000255" key="3">
    <source>
        <dbReference type="PROSITE-ProRule" id="PRU00119"/>
    </source>
</evidence>
<evidence type="ECO:0000305" key="4"/>
<accession>Q80W31</accession>
<accession>E9QK35</accession>
<accession>O88237</accession>
<dbReference type="EMBL" id="AC149283">
    <property type="status" value="NOT_ANNOTATED_CDS"/>
    <property type="molecule type" value="Genomic_DNA"/>
</dbReference>
<dbReference type="EMBL" id="BC050048">
    <property type="protein sequence ID" value="AAH50048.1"/>
    <property type="molecule type" value="mRNA"/>
</dbReference>
<dbReference type="EMBL" id="AB010334">
    <property type="protein sequence ID" value="BAA31390.1"/>
    <property type="molecule type" value="mRNA"/>
</dbReference>
<dbReference type="CCDS" id="CCDS39874.1"/>
<dbReference type="RefSeq" id="NP_848471.2">
    <property type="nucleotide sequence ID" value="NM_178384.3"/>
</dbReference>
<dbReference type="RefSeq" id="XP_006540447.1">
    <property type="nucleotide sequence ID" value="XM_006540384.3"/>
</dbReference>
<dbReference type="RefSeq" id="XP_006540448.1">
    <property type="nucleotide sequence ID" value="XM_006540385.3"/>
</dbReference>
<dbReference type="RefSeq" id="XP_011249022.1">
    <property type="nucleotide sequence ID" value="XM_011250720.2"/>
</dbReference>
<dbReference type="SMR" id="Q80W31"/>
<dbReference type="FunCoup" id="Q80W31">
    <property type="interactions" value="18"/>
</dbReference>
<dbReference type="STRING" id="10090.ENSMUSP00000103840"/>
<dbReference type="iPTMnet" id="Q80W31"/>
<dbReference type="PhosphoSitePlus" id="Q80W31"/>
<dbReference type="PaxDb" id="10090-ENSMUSP00000103840"/>
<dbReference type="ProteomicsDB" id="299588"/>
<dbReference type="Antibodypedia" id="44797">
    <property type="antibodies" value="87 antibodies from 14 providers"/>
</dbReference>
<dbReference type="DNASU" id="72723"/>
<dbReference type="Ensembl" id="ENSMUST00000032797.9">
    <property type="protein sequence ID" value="ENSMUSP00000032797.9"/>
    <property type="gene ID" value="ENSMUSG00000059975.16"/>
</dbReference>
<dbReference type="Ensembl" id="ENSMUST00000108205.9">
    <property type="protein sequence ID" value="ENSMUSP00000103840.2"/>
    <property type="gene ID" value="ENSMUSG00000059975.16"/>
</dbReference>
<dbReference type="GeneID" id="72723"/>
<dbReference type="KEGG" id="mmu:72723"/>
<dbReference type="UCSC" id="uc009gcr.1">
    <property type="organism name" value="mouse"/>
</dbReference>
<dbReference type="AGR" id="MGI:107784"/>
<dbReference type="CTD" id="72723"/>
<dbReference type="MGI" id="MGI:107784">
    <property type="gene designation" value="Zfp74"/>
</dbReference>
<dbReference type="VEuPathDB" id="HostDB:ENSMUSG00000059975"/>
<dbReference type="eggNOG" id="KOG1721">
    <property type="taxonomic scope" value="Eukaryota"/>
</dbReference>
<dbReference type="GeneTree" id="ENSGT00940000154650"/>
<dbReference type="HOGENOM" id="CLU_002678_44_5_1"/>
<dbReference type="InParanoid" id="Q80W31"/>
<dbReference type="OMA" id="CLEHNNF"/>
<dbReference type="OrthoDB" id="9411774at2759"/>
<dbReference type="PhylomeDB" id="Q80W31"/>
<dbReference type="TreeFam" id="TF337898"/>
<dbReference type="Reactome" id="R-MMU-212436">
    <property type="pathway name" value="Generic Transcription Pathway"/>
</dbReference>
<dbReference type="BioGRID-ORCS" id="72723">
    <property type="hits" value="1 hit in 62 CRISPR screens"/>
</dbReference>
<dbReference type="ChiTaRS" id="Zfp74">
    <property type="organism name" value="mouse"/>
</dbReference>
<dbReference type="PRO" id="PR:Q80W31"/>
<dbReference type="Proteomes" id="UP000000589">
    <property type="component" value="Chromosome 7"/>
</dbReference>
<dbReference type="RNAct" id="Q80W31">
    <property type="molecule type" value="protein"/>
</dbReference>
<dbReference type="Bgee" id="ENSMUSG00000059975">
    <property type="expression patterns" value="Expressed in manus and 195 other cell types or tissues"/>
</dbReference>
<dbReference type="ExpressionAtlas" id="Q80W31">
    <property type="expression patterns" value="baseline and differential"/>
</dbReference>
<dbReference type="GO" id="GO:0005634">
    <property type="term" value="C:nucleus"/>
    <property type="evidence" value="ECO:0007669"/>
    <property type="project" value="UniProtKB-SubCell"/>
</dbReference>
<dbReference type="GO" id="GO:0003677">
    <property type="term" value="F:DNA binding"/>
    <property type="evidence" value="ECO:0007669"/>
    <property type="project" value="UniProtKB-KW"/>
</dbReference>
<dbReference type="GO" id="GO:0008270">
    <property type="term" value="F:zinc ion binding"/>
    <property type="evidence" value="ECO:0007669"/>
    <property type="project" value="UniProtKB-KW"/>
</dbReference>
<dbReference type="GO" id="GO:0006355">
    <property type="term" value="P:regulation of DNA-templated transcription"/>
    <property type="evidence" value="ECO:0007669"/>
    <property type="project" value="InterPro"/>
</dbReference>
<dbReference type="CDD" id="cd07765">
    <property type="entry name" value="KRAB_A-box"/>
    <property type="match status" value="1"/>
</dbReference>
<dbReference type="FunFam" id="3.30.160.60:FF:000100">
    <property type="entry name" value="Zinc finger 45-like"/>
    <property type="match status" value="1"/>
</dbReference>
<dbReference type="FunFam" id="3.30.160.60:FF:000478">
    <property type="entry name" value="Zinc finger protein 133"/>
    <property type="match status" value="2"/>
</dbReference>
<dbReference type="FunFam" id="3.30.160.60:FF:000824">
    <property type="entry name" value="Zinc finger protein 184"/>
    <property type="match status" value="1"/>
</dbReference>
<dbReference type="FunFam" id="3.30.160.60:FF:001158">
    <property type="entry name" value="zinc finger protein 22"/>
    <property type="match status" value="1"/>
</dbReference>
<dbReference type="FunFam" id="3.30.160.60:FF:002343">
    <property type="entry name" value="Zinc finger protein 33A"/>
    <property type="match status" value="2"/>
</dbReference>
<dbReference type="FunFam" id="3.30.160.60:FF:000135">
    <property type="entry name" value="Zinc finger protein 358"/>
    <property type="match status" value="1"/>
</dbReference>
<dbReference type="FunFam" id="3.30.160.60:FF:000016">
    <property type="entry name" value="zinc finger protein 37 homolog"/>
    <property type="match status" value="3"/>
</dbReference>
<dbReference type="FunFam" id="3.30.160.60:FF:000023">
    <property type="entry name" value="zinc finger protein 37 homolog"/>
    <property type="match status" value="1"/>
</dbReference>
<dbReference type="FunFam" id="3.30.160.60:FF:001498">
    <property type="entry name" value="Zinc finger protein 404"/>
    <property type="match status" value="1"/>
</dbReference>
<dbReference type="FunFam" id="3.30.160.60:FF:002254">
    <property type="entry name" value="Zinc finger protein 540"/>
    <property type="match status" value="1"/>
</dbReference>
<dbReference type="FunFam" id="3.30.160.60:FF:000737">
    <property type="entry name" value="Zinc finger protein 565"/>
    <property type="match status" value="1"/>
</dbReference>
<dbReference type="FunFam" id="3.30.160.60:FF:000149">
    <property type="entry name" value="Zinc finger protein 569"/>
    <property type="match status" value="1"/>
</dbReference>
<dbReference type="FunFam" id="3.30.160.60:FF:001558">
    <property type="entry name" value="Zinc finger protein 569"/>
    <property type="match status" value="1"/>
</dbReference>
<dbReference type="FunFam" id="3.30.160.60:FF:001270">
    <property type="entry name" value="zinc finger protein 583 isoform X1"/>
    <property type="match status" value="1"/>
</dbReference>
<dbReference type="Gene3D" id="6.10.140.140">
    <property type="match status" value="1"/>
</dbReference>
<dbReference type="Gene3D" id="3.30.160.60">
    <property type="entry name" value="Classic Zinc Finger"/>
    <property type="match status" value="18"/>
</dbReference>
<dbReference type="InterPro" id="IPR001909">
    <property type="entry name" value="KRAB"/>
</dbReference>
<dbReference type="InterPro" id="IPR036051">
    <property type="entry name" value="KRAB_dom_sf"/>
</dbReference>
<dbReference type="InterPro" id="IPR036236">
    <property type="entry name" value="Znf_C2H2_sf"/>
</dbReference>
<dbReference type="InterPro" id="IPR013087">
    <property type="entry name" value="Znf_C2H2_type"/>
</dbReference>
<dbReference type="PANTHER" id="PTHR24394">
    <property type="entry name" value="ZINC FINGER PROTEIN"/>
    <property type="match status" value="1"/>
</dbReference>
<dbReference type="PANTHER" id="PTHR24394:SF48">
    <property type="entry name" value="ZINC FINGER PROTEIN 771"/>
    <property type="match status" value="1"/>
</dbReference>
<dbReference type="Pfam" id="PF01352">
    <property type="entry name" value="KRAB"/>
    <property type="match status" value="1"/>
</dbReference>
<dbReference type="Pfam" id="PF00096">
    <property type="entry name" value="zf-C2H2"/>
    <property type="match status" value="16"/>
</dbReference>
<dbReference type="Pfam" id="PF13465">
    <property type="entry name" value="zf-H2C2_2"/>
    <property type="match status" value="1"/>
</dbReference>
<dbReference type="SMART" id="SM00349">
    <property type="entry name" value="KRAB"/>
    <property type="match status" value="1"/>
</dbReference>
<dbReference type="SMART" id="SM00355">
    <property type="entry name" value="ZnF_C2H2"/>
    <property type="match status" value="18"/>
</dbReference>
<dbReference type="SUPFAM" id="SSF57667">
    <property type="entry name" value="beta-beta-alpha zinc fingers"/>
    <property type="match status" value="10"/>
</dbReference>
<dbReference type="SUPFAM" id="SSF109640">
    <property type="entry name" value="KRAB domain (Kruppel-associated box)"/>
    <property type="match status" value="1"/>
</dbReference>
<dbReference type="PROSITE" id="PS50805">
    <property type="entry name" value="KRAB"/>
    <property type="match status" value="1"/>
</dbReference>
<dbReference type="PROSITE" id="PS00028">
    <property type="entry name" value="ZINC_FINGER_C2H2_1"/>
    <property type="match status" value="18"/>
</dbReference>
<dbReference type="PROSITE" id="PS50157">
    <property type="entry name" value="ZINC_FINGER_C2H2_2"/>
    <property type="match status" value="18"/>
</dbReference>
<organism>
    <name type="scientific">Mus musculus</name>
    <name type="common">Mouse</name>
    <dbReference type="NCBI Taxonomy" id="10090"/>
    <lineage>
        <taxon>Eukaryota</taxon>
        <taxon>Metazoa</taxon>
        <taxon>Chordata</taxon>
        <taxon>Craniata</taxon>
        <taxon>Vertebrata</taxon>
        <taxon>Euteleostomi</taxon>
        <taxon>Mammalia</taxon>
        <taxon>Eutheria</taxon>
        <taxon>Euarchontoglires</taxon>
        <taxon>Glires</taxon>
        <taxon>Rodentia</taxon>
        <taxon>Myomorpha</taxon>
        <taxon>Muroidea</taxon>
        <taxon>Muridae</taxon>
        <taxon>Murinae</taxon>
        <taxon>Mus</taxon>
        <taxon>Mus</taxon>
    </lineage>
</organism>
<sequence>MTESEGLVTFKDVAIDFTQEEWKQLDPTQRNLYRNVMLENYNNLITVGPPLTKPEVIFKLEQEEEPCVVEREVLWRPCPGEILGIDEHQKIQDGQVFEGIVVTSEASECPEEFASTFFPNADSIPSMHSLFECDGVGECLEPNFGDDDVQYPLPEEQFEYDDAMQPFHTSSPHFVLTPFKCNHCGKGFSQTLDLIRHLRVHTGGKLYECHQCGKGFSHKEKLINHHKLHSREQCYECSECGKTFIKMSNLIRHQRIHTGEKPYVCQECGKSFGQKSNLIDHEKIHTGEKPYKCNECGKSFSQKQSLVAHQKVHTGEKPYACNECGKAFPRVASLALHMRGHTGEKPYKCDKCGKAFSQFSMLIIHVRVHTGEKPYECGECGKAFSQSSALTVHIRSHTGEKPYECKECRKSFSHKKNFITHQKIHTREKPYGCNECGKAFIQMSNLVRHQRIHTGEKPYLCKECGKAFSQKSNLIAHEKIHSGEKPYECNECGKAFSQKQNFITHQKVHTGEKPYDCNKCGKAFSQIASLTLHLRSHTGEKPYECEKCGKAFSQCSLLNLHMRSHTGEKPYVCNECGKAFSQRTSLIVHMRGHTGEKPYECNKCGKAFSQSSSLTIHIRGHTGEKPFDCSNCGKAFSQISSLTLHMRKHTGEKPYVCIECGKAFSQKSHLVRHQRIHTH</sequence>
<keyword id="KW-0238">DNA-binding</keyword>
<keyword id="KW-0479">Metal-binding</keyword>
<keyword id="KW-0539">Nucleus</keyword>
<keyword id="KW-1185">Reference proteome</keyword>
<keyword id="KW-0677">Repeat</keyword>
<keyword id="KW-0804">Transcription</keyword>
<keyword id="KW-0805">Transcription regulation</keyword>
<keyword id="KW-0862">Zinc</keyword>
<keyword id="KW-0863">Zinc-finger</keyword>